<protein>
    <recommendedName>
        <fullName>Histone-lysine N-methyltransferase, H3 lysine-79 specific</fullName>
        <ecNumber>2.1.1.360</ecNumber>
    </recommendedName>
    <alternativeName>
        <fullName>Histone H3-K79 methyltransferase</fullName>
        <shortName>H3-K79-HMTase</shortName>
    </alternativeName>
</protein>
<sequence>MISGHLQTPDSSDHSGDEAKLTKPSGLESKTNELWSSDLEEELESRIMQPATFSSILKQFPSISEETIISKIMSNKNCDKNNWKKKIYCYRYFLQPSKEEPDVGNMKSLVEKLEKLKLKKWSASEIEQLFCNYLEDLTTSAVKVSIPGKTLDEVAAAVNNIHPRPRWTRKEIECLIKNENDFKKLEKDLFVRDLDSIKKKIRRDNLSIQNEIQDSEKKSPQSTDSNNKDSSRDLSRKERDQLKKLLSKPICFSELLAKFPGHSWEYIAREIIQLDSSEDNTIWLKKIYYYCVVYSISVDKEITKYIGGGNRIYEKVRSDWSKIKTLDFFKDWSLQEFERLYCFAFHDLTKSALTKNFPSKNLNDICKVVNISFPKVPYTDREMKYLERHLDTPMQTLENNLPFRSRGSIHKKLEALKALTETTEQKQPPTKTRPKNEEEKNVENAAYMKELIMFDLTLEAIENTFPSEPIEEIIKEIKNSEIFDPLSFTRGEKELMAKLVKKGNLIDDCFDYFPLREEEFIRSKYAEAEYVSGRKMKFNTPEERLAYEAKWTLFNMGKQEYGRGNRRSTKRYCEIDELSKLEQEASVKRSKKKIELTEEELEQRRKRSEHFRLCRLKKLEEKREKYRIEKAKRLEKIAAGLIKPSTSGYELKDIVTSAEYFQSIVGDKQKVQEGQKRKRIQTEYFAPEFIEKPKAVKLKTTKRQAEKNKIKKQLKREAQLKIKKKKTIAPKKGKRRVKTNNGIIEEIKDVYKLSSEPYVESEVEEEDEEEDYISPYDPPDIISDSQVKLNGRHLYISSFYKELPEIPELKFVSLPHMEMSGNDITVAKQIMTTANDDILYDDCLAYEIVAQHIKSYRDLPISFPPVLDPITHELNSANIVRIRFFLYPEHYESFMLASPKSNELDPVHEIAKLFMIQYSLYFSHSDTLKKIITEDYCHKLEHSVEENDFGEFMFVVDKWNQLVMKLSPNLASVQNILGLKEDINEAPRAYLNQQEVSIPTNSDLKIETFYDEIMYESASPLFNPINSNLEIDSESAPIPLGEVEIPNNVIEEINEKMPDNYIPDFFRRLKEKTEVSRYAMQQILLRVYSRVVSTDSRKLRSYKAFTAETYGELLPSFTSEVLEKLNLLPTQKFYDLGSGVGNTTFQAALEFGACSSGGCEIMEHASKLTELQAGLIQKHLAVLGLQKLNLDFALHESFVGNEKVRASCLDCDVLIINNYLFDGQLNDEVGKLLYGLRPGTKIVSLRNFISPRYRATFDTVFDFLSVEKHEMSDIMSVSWTANKVPYYISTVEETIPREYLSREETKETSGKSKSVSPVGEIENVAAAMMTPPTDSSESEIIKN</sequence>
<reference key="1">
    <citation type="journal article" date="2004" name="Proc. Natl. Acad. Sci. U.S.A.">
        <title>The diploid genome sequence of Candida albicans.</title>
        <authorList>
            <person name="Jones T."/>
            <person name="Federspiel N.A."/>
            <person name="Chibana H."/>
            <person name="Dungan J."/>
            <person name="Kalman S."/>
            <person name="Magee B.B."/>
            <person name="Newport G."/>
            <person name="Thorstenson Y.R."/>
            <person name="Agabian N."/>
            <person name="Magee P.T."/>
            <person name="Davis R.W."/>
            <person name="Scherer S."/>
        </authorList>
    </citation>
    <scope>NUCLEOTIDE SEQUENCE [LARGE SCALE GENOMIC DNA]</scope>
    <source>
        <strain>SC5314 / ATCC MYA-2876</strain>
    </source>
</reference>
<reference key="2">
    <citation type="journal article" date="2007" name="Genome Biol.">
        <title>Assembly of the Candida albicans genome into sixteen supercontigs aligned on the eight chromosomes.</title>
        <authorList>
            <person name="van het Hoog M."/>
            <person name="Rast T.J."/>
            <person name="Martchenko M."/>
            <person name="Grindle S."/>
            <person name="Dignard D."/>
            <person name="Hogues H."/>
            <person name="Cuomo C."/>
            <person name="Berriman M."/>
            <person name="Scherer S."/>
            <person name="Magee B.B."/>
            <person name="Whiteway M."/>
            <person name="Chibana H."/>
            <person name="Nantel A."/>
            <person name="Magee P.T."/>
        </authorList>
    </citation>
    <scope>GENOME REANNOTATION</scope>
    <source>
        <strain>SC5314 / ATCC MYA-2876</strain>
    </source>
</reference>
<reference key="3">
    <citation type="journal article" date="2013" name="Genome Biol.">
        <title>Assembly of a phased diploid Candida albicans genome facilitates allele-specific measurements and provides a simple model for repeat and indel structure.</title>
        <authorList>
            <person name="Muzzey D."/>
            <person name="Schwartz K."/>
            <person name="Weissman J.S."/>
            <person name="Sherlock G."/>
        </authorList>
    </citation>
    <scope>NUCLEOTIDE SEQUENCE [LARGE SCALE GENOMIC DNA]</scope>
    <scope>GENOME REANNOTATION</scope>
    <source>
        <strain>SC5314 / ATCC MYA-2876</strain>
    </source>
</reference>
<name>DOT1_CANAL</name>
<gene>
    <name type="primary">DOT1</name>
    <name type="ordered locus">CAALFM_C306300WA</name>
    <name type="ORF">CaO19.7402</name>
</gene>
<proteinExistence type="inferred from homology"/>
<comment type="function">
    <text evidence="2">Histone methyltransferase that specifically trimethylates histone H3 to form H3K79me3. This methylation is required for telomere silencing and for the pachytene checkpoint during the meiotic cell cycle by allowing the recruitment of RAD9 to double strand breaks. Nucleosomes are preferred as substrate compared to free histone.</text>
</comment>
<comment type="catalytic activity">
    <reaction evidence="2 3">
        <text>L-lysyl(79)-[histone H3] + 3 S-adenosyl-L-methionine = N(6),N(6),N(6)-trimethyl-L-lysyl(79)-[histone H3] + 3 S-adenosyl-L-homocysteine + 3 H(+)</text>
        <dbReference type="Rhea" id="RHEA:60328"/>
        <dbReference type="Rhea" id="RHEA-COMP:15549"/>
        <dbReference type="Rhea" id="RHEA-COMP:15552"/>
        <dbReference type="ChEBI" id="CHEBI:15378"/>
        <dbReference type="ChEBI" id="CHEBI:29969"/>
        <dbReference type="ChEBI" id="CHEBI:57856"/>
        <dbReference type="ChEBI" id="CHEBI:59789"/>
        <dbReference type="ChEBI" id="CHEBI:61961"/>
        <dbReference type="EC" id="2.1.1.360"/>
    </reaction>
</comment>
<comment type="activity regulation">
    <text evidence="1">Ubiquitination of histone H2B to form H2BK123ub1 is required for efficient DOT1 methyltransferase activity on histone H3.</text>
</comment>
<comment type="subcellular location">
    <subcellularLocation>
        <location evidence="1">Nucleus</location>
    </subcellularLocation>
</comment>
<comment type="miscellaneous">
    <text>In contrast to other lysine histone methyltransferases, it does not contain a SET domain, suggesting the existence of another mechanism for methylation of lysine residues of histones.</text>
</comment>
<comment type="similarity">
    <text evidence="3">Belongs to the class I-like SAM-binding methyltransferase superfamily. DOT1 family.</text>
</comment>
<feature type="chain" id="PRO_0000270606" description="Histone-lysine N-methyltransferase, H3 lysine-79 specific">
    <location>
        <begin position="1"/>
        <end position="1343"/>
    </location>
</feature>
<feature type="domain" description="DOT1" evidence="3">
    <location>
        <begin position="987"/>
        <end position="1304"/>
    </location>
</feature>
<feature type="region of interest" description="Disordered" evidence="4">
    <location>
        <begin position="1"/>
        <end position="29"/>
    </location>
</feature>
<feature type="region of interest" description="Disordered" evidence="4">
    <location>
        <begin position="210"/>
        <end position="236"/>
    </location>
</feature>
<feature type="region of interest" description="Disordered" evidence="4">
    <location>
        <begin position="418"/>
        <end position="439"/>
    </location>
</feature>
<feature type="compositionally biased region" description="Polar residues" evidence="4">
    <location>
        <begin position="1"/>
        <end position="10"/>
    </location>
</feature>
<feature type="compositionally biased region" description="Basic and acidic residues" evidence="4">
    <location>
        <begin position="11"/>
        <end position="21"/>
    </location>
</feature>
<feature type="compositionally biased region" description="Basic and acidic residues" evidence="4">
    <location>
        <begin position="226"/>
        <end position="236"/>
    </location>
</feature>
<feature type="compositionally biased region" description="Polar residues" evidence="4">
    <location>
        <begin position="420"/>
        <end position="430"/>
    </location>
</feature>
<feature type="binding site" evidence="3">
    <location>
        <begin position="1110"/>
        <end position="1113"/>
    </location>
    <ligand>
        <name>S-adenosyl-L-methionine</name>
        <dbReference type="ChEBI" id="CHEBI:59789"/>
    </ligand>
</feature>
<feature type="binding site" evidence="3">
    <location>
        <begin position="1133"/>
        <end position="1142"/>
    </location>
    <ligand>
        <name>S-adenosyl-L-methionine</name>
        <dbReference type="ChEBI" id="CHEBI:59789"/>
    </ligand>
</feature>
<feature type="binding site" evidence="3">
    <location>
        <position position="1160"/>
    </location>
    <ligand>
        <name>S-adenosyl-L-methionine</name>
        <dbReference type="ChEBI" id="CHEBI:59789"/>
    </ligand>
</feature>
<feature type="binding site" evidence="3">
    <location>
        <begin position="1197"/>
        <end position="1198"/>
    </location>
    <ligand>
        <name>S-adenosyl-L-methionine</name>
        <dbReference type="ChEBI" id="CHEBI:59789"/>
    </ligand>
</feature>
<accession>Q5A309</accession>
<accession>A0A1D8PKG3</accession>
<organism>
    <name type="scientific">Candida albicans (strain SC5314 / ATCC MYA-2876)</name>
    <name type="common">Yeast</name>
    <dbReference type="NCBI Taxonomy" id="237561"/>
    <lineage>
        <taxon>Eukaryota</taxon>
        <taxon>Fungi</taxon>
        <taxon>Dikarya</taxon>
        <taxon>Ascomycota</taxon>
        <taxon>Saccharomycotina</taxon>
        <taxon>Pichiomycetes</taxon>
        <taxon>Debaryomycetaceae</taxon>
        <taxon>Candida/Lodderomyces clade</taxon>
        <taxon>Candida</taxon>
    </lineage>
</organism>
<dbReference type="EC" id="2.1.1.360"/>
<dbReference type="EMBL" id="CP017625">
    <property type="protein sequence ID" value="AOW28637.1"/>
    <property type="molecule type" value="Genomic_DNA"/>
</dbReference>
<dbReference type="RefSeq" id="XP_716067.1">
    <property type="nucleotide sequence ID" value="XM_710974.1"/>
</dbReference>
<dbReference type="SMR" id="Q5A309"/>
<dbReference type="STRING" id="237561.Q5A309"/>
<dbReference type="EnsemblFungi" id="C3_06300W_A-T">
    <property type="protein sequence ID" value="C3_06300W_A-T-p1"/>
    <property type="gene ID" value="C3_06300W_A"/>
</dbReference>
<dbReference type="GeneID" id="3642236"/>
<dbReference type="KEGG" id="cal:CAALFM_C306300WA"/>
<dbReference type="CGD" id="CAL0000184097">
    <property type="gene designation" value="DOT1"/>
</dbReference>
<dbReference type="VEuPathDB" id="FungiDB:C3_06300W_A"/>
<dbReference type="eggNOG" id="KOG3924">
    <property type="taxonomic scope" value="Eukaryota"/>
</dbReference>
<dbReference type="HOGENOM" id="CLU_004528_0_0_1"/>
<dbReference type="InParanoid" id="Q5A309"/>
<dbReference type="OMA" id="NFIPPRY"/>
<dbReference type="OrthoDB" id="443402at2759"/>
<dbReference type="Proteomes" id="UP000000559">
    <property type="component" value="Chromosome 3"/>
</dbReference>
<dbReference type="GO" id="GO:0000781">
    <property type="term" value="C:chromosome, telomeric region"/>
    <property type="evidence" value="ECO:0007669"/>
    <property type="project" value="GOC"/>
</dbReference>
<dbReference type="GO" id="GO:0005634">
    <property type="term" value="C:nucleus"/>
    <property type="evidence" value="ECO:0000318"/>
    <property type="project" value="GO_Central"/>
</dbReference>
<dbReference type="GO" id="GO:0031151">
    <property type="term" value="F:histone H3K79 methyltransferase activity"/>
    <property type="evidence" value="ECO:0000318"/>
    <property type="project" value="GO_Central"/>
</dbReference>
<dbReference type="GO" id="GO:0140956">
    <property type="term" value="F:histone H3K79 trimethyltransferase activity"/>
    <property type="evidence" value="ECO:0007669"/>
    <property type="project" value="UniProtKB-EC"/>
</dbReference>
<dbReference type="GO" id="GO:0000077">
    <property type="term" value="P:DNA damage checkpoint signaling"/>
    <property type="evidence" value="ECO:0000318"/>
    <property type="project" value="GO_Central"/>
</dbReference>
<dbReference type="GO" id="GO:0006281">
    <property type="term" value="P:DNA repair"/>
    <property type="evidence" value="ECO:0000318"/>
    <property type="project" value="GO_Central"/>
</dbReference>
<dbReference type="GO" id="GO:0032259">
    <property type="term" value="P:methylation"/>
    <property type="evidence" value="ECO:0007669"/>
    <property type="project" value="UniProtKB-KW"/>
</dbReference>
<dbReference type="GO" id="GO:0031509">
    <property type="term" value="P:subtelomeric heterochromatin formation"/>
    <property type="evidence" value="ECO:0000318"/>
    <property type="project" value="GO_Central"/>
</dbReference>
<dbReference type="Gene3D" id="1.10.260.170">
    <property type="match status" value="1"/>
</dbReference>
<dbReference type="Gene3D" id="3.40.50.150">
    <property type="entry name" value="Vaccinia Virus protein VP39"/>
    <property type="match status" value="1"/>
</dbReference>
<dbReference type="InterPro" id="IPR025789">
    <property type="entry name" value="DOT1_dom"/>
</dbReference>
<dbReference type="InterPro" id="IPR030445">
    <property type="entry name" value="H3-K79_meTrfase"/>
</dbReference>
<dbReference type="InterPro" id="IPR029063">
    <property type="entry name" value="SAM-dependent_MTases_sf"/>
</dbReference>
<dbReference type="PANTHER" id="PTHR21451">
    <property type="entry name" value="HISTONE H3 METHYLTRANSFERASE"/>
    <property type="match status" value="1"/>
</dbReference>
<dbReference type="PANTHER" id="PTHR21451:SF0">
    <property type="entry name" value="HISTONE-LYSINE N-METHYLTRANSFERASE, H3 LYSINE-79 SPECIFIC"/>
    <property type="match status" value="1"/>
</dbReference>
<dbReference type="Pfam" id="PF08123">
    <property type="entry name" value="DOT1"/>
    <property type="match status" value="1"/>
</dbReference>
<dbReference type="SUPFAM" id="SSF53335">
    <property type="entry name" value="S-adenosyl-L-methionine-dependent methyltransferases"/>
    <property type="match status" value="1"/>
</dbReference>
<dbReference type="PROSITE" id="PS51569">
    <property type="entry name" value="DOT1"/>
    <property type="match status" value="1"/>
</dbReference>
<evidence type="ECO:0000250" key="1"/>
<evidence type="ECO:0000250" key="2">
    <source>
        <dbReference type="UniProtKB" id="Q04089"/>
    </source>
</evidence>
<evidence type="ECO:0000255" key="3">
    <source>
        <dbReference type="PROSITE-ProRule" id="PRU00902"/>
    </source>
</evidence>
<evidence type="ECO:0000256" key="4">
    <source>
        <dbReference type="SAM" id="MobiDB-lite"/>
    </source>
</evidence>
<keyword id="KW-0156">Chromatin regulator</keyword>
<keyword id="KW-0489">Methyltransferase</keyword>
<keyword id="KW-0539">Nucleus</keyword>
<keyword id="KW-1185">Reference proteome</keyword>
<keyword id="KW-0677">Repeat</keyword>
<keyword id="KW-0949">S-adenosyl-L-methionine</keyword>
<keyword id="KW-0804">Transcription</keyword>
<keyword id="KW-0805">Transcription regulation</keyword>
<keyword id="KW-0808">Transferase</keyword>